<gene>
    <name evidence="1" type="primary">dxr</name>
    <name type="ordered locus">MYCGA0920</name>
    <name type="ORF">MGA_0787</name>
</gene>
<comment type="function">
    <text evidence="1">Catalyzes the NADPH-dependent rearrangement and reduction of 1-deoxy-D-xylulose-5-phosphate (DXP) to 2-C-methyl-D-erythritol 4-phosphate (MEP).</text>
</comment>
<comment type="catalytic activity">
    <reaction evidence="1">
        <text>2-C-methyl-D-erythritol 4-phosphate + NADP(+) = 1-deoxy-D-xylulose 5-phosphate + NADPH + H(+)</text>
        <dbReference type="Rhea" id="RHEA:13717"/>
        <dbReference type="ChEBI" id="CHEBI:15378"/>
        <dbReference type="ChEBI" id="CHEBI:57783"/>
        <dbReference type="ChEBI" id="CHEBI:57792"/>
        <dbReference type="ChEBI" id="CHEBI:58262"/>
        <dbReference type="ChEBI" id="CHEBI:58349"/>
        <dbReference type="EC" id="1.1.1.267"/>
    </reaction>
    <physiologicalReaction direction="right-to-left" evidence="1">
        <dbReference type="Rhea" id="RHEA:13719"/>
    </physiologicalReaction>
</comment>
<comment type="cofactor">
    <cofactor evidence="1">
        <name>Mg(2+)</name>
        <dbReference type="ChEBI" id="CHEBI:18420"/>
    </cofactor>
    <cofactor evidence="1">
        <name>Mn(2+)</name>
        <dbReference type="ChEBI" id="CHEBI:29035"/>
    </cofactor>
</comment>
<comment type="pathway">
    <text evidence="1">Isoprenoid biosynthesis; isopentenyl diphosphate biosynthesis via DXP pathway; isopentenyl diphosphate from 1-deoxy-D-xylulose 5-phosphate: step 1/6.</text>
</comment>
<comment type="similarity">
    <text evidence="1">Belongs to the DXR family.</text>
</comment>
<dbReference type="EC" id="1.1.1.267" evidence="1"/>
<dbReference type="EMBL" id="AE015450">
    <property type="protein sequence ID" value="AAP56442.1"/>
    <property type="molecule type" value="Genomic_DNA"/>
</dbReference>
<dbReference type="RefSeq" id="WP_011113321.1">
    <property type="nucleotide sequence ID" value="NC_004829.2"/>
</dbReference>
<dbReference type="SMR" id="Q7NC17"/>
<dbReference type="KEGG" id="mga:MGA_0787"/>
<dbReference type="PATRIC" id="fig|233150.7.peg.96"/>
<dbReference type="HOGENOM" id="CLU_035714_0_0_14"/>
<dbReference type="OrthoDB" id="9806546at2"/>
<dbReference type="UniPathway" id="UPA00056">
    <property type="reaction ID" value="UER00092"/>
</dbReference>
<dbReference type="Proteomes" id="UP000001418">
    <property type="component" value="Chromosome"/>
</dbReference>
<dbReference type="GO" id="GO:0030604">
    <property type="term" value="F:1-deoxy-D-xylulose-5-phosphate reductoisomerase activity"/>
    <property type="evidence" value="ECO:0007669"/>
    <property type="project" value="UniProtKB-UniRule"/>
</dbReference>
<dbReference type="GO" id="GO:0030145">
    <property type="term" value="F:manganese ion binding"/>
    <property type="evidence" value="ECO:0007669"/>
    <property type="project" value="TreeGrafter"/>
</dbReference>
<dbReference type="GO" id="GO:0070402">
    <property type="term" value="F:NADPH binding"/>
    <property type="evidence" value="ECO:0007669"/>
    <property type="project" value="InterPro"/>
</dbReference>
<dbReference type="GO" id="GO:0051484">
    <property type="term" value="P:isopentenyl diphosphate biosynthetic process, methylerythritol 4-phosphate pathway involved in terpenoid biosynthetic process"/>
    <property type="evidence" value="ECO:0007669"/>
    <property type="project" value="TreeGrafter"/>
</dbReference>
<dbReference type="Gene3D" id="1.10.1740.10">
    <property type="match status" value="1"/>
</dbReference>
<dbReference type="Gene3D" id="3.40.50.720">
    <property type="entry name" value="NAD(P)-binding Rossmann-like Domain"/>
    <property type="match status" value="1"/>
</dbReference>
<dbReference type="HAMAP" id="MF_00183">
    <property type="entry name" value="DXP_reductoisom"/>
    <property type="match status" value="1"/>
</dbReference>
<dbReference type="InterPro" id="IPR003821">
    <property type="entry name" value="DXP_reductoisomerase"/>
</dbReference>
<dbReference type="InterPro" id="IPR013644">
    <property type="entry name" value="DXP_reductoisomerase_C"/>
</dbReference>
<dbReference type="InterPro" id="IPR013512">
    <property type="entry name" value="DXP_reductoisomerase_N"/>
</dbReference>
<dbReference type="InterPro" id="IPR026877">
    <property type="entry name" value="DXPR_C"/>
</dbReference>
<dbReference type="InterPro" id="IPR036169">
    <property type="entry name" value="DXPR_C_sf"/>
</dbReference>
<dbReference type="InterPro" id="IPR036291">
    <property type="entry name" value="NAD(P)-bd_dom_sf"/>
</dbReference>
<dbReference type="PANTHER" id="PTHR30525">
    <property type="entry name" value="1-DEOXY-D-XYLULOSE 5-PHOSPHATE REDUCTOISOMERASE"/>
    <property type="match status" value="1"/>
</dbReference>
<dbReference type="PANTHER" id="PTHR30525:SF0">
    <property type="entry name" value="1-DEOXY-D-XYLULOSE 5-PHOSPHATE REDUCTOISOMERASE, CHLOROPLASTIC"/>
    <property type="match status" value="1"/>
</dbReference>
<dbReference type="Pfam" id="PF08436">
    <property type="entry name" value="DXP_redisom_C"/>
    <property type="match status" value="1"/>
</dbReference>
<dbReference type="Pfam" id="PF02670">
    <property type="entry name" value="DXP_reductoisom"/>
    <property type="match status" value="1"/>
</dbReference>
<dbReference type="Pfam" id="PF13288">
    <property type="entry name" value="DXPR_C"/>
    <property type="match status" value="1"/>
</dbReference>
<dbReference type="PIRSF" id="PIRSF006205">
    <property type="entry name" value="Dxp_reductismrs"/>
    <property type="match status" value="1"/>
</dbReference>
<dbReference type="SUPFAM" id="SSF69055">
    <property type="entry name" value="1-deoxy-D-xylulose-5-phosphate reductoisomerase, C-terminal domain"/>
    <property type="match status" value="1"/>
</dbReference>
<dbReference type="SUPFAM" id="SSF55347">
    <property type="entry name" value="Glyceraldehyde-3-phosphate dehydrogenase-like, C-terminal domain"/>
    <property type="match status" value="1"/>
</dbReference>
<dbReference type="SUPFAM" id="SSF51735">
    <property type="entry name" value="NAD(P)-binding Rossmann-fold domains"/>
    <property type="match status" value="1"/>
</dbReference>
<evidence type="ECO:0000255" key="1">
    <source>
        <dbReference type="HAMAP-Rule" id="MF_00183"/>
    </source>
</evidence>
<name>DXR_MYCGA</name>
<feature type="chain" id="PRO_0000163679" description="1-deoxy-D-xylulose 5-phosphate reductoisomerase">
    <location>
        <begin position="1"/>
        <end position="368"/>
    </location>
</feature>
<feature type="binding site" evidence="1">
    <location>
        <position position="9"/>
    </location>
    <ligand>
        <name>NADPH</name>
        <dbReference type="ChEBI" id="CHEBI:57783"/>
    </ligand>
</feature>
<feature type="binding site" evidence="1">
    <location>
        <position position="10"/>
    </location>
    <ligand>
        <name>NADPH</name>
        <dbReference type="ChEBI" id="CHEBI:57783"/>
    </ligand>
</feature>
<feature type="binding site" evidence="1">
    <location>
        <position position="11"/>
    </location>
    <ligand>
        <name>NADPH</name>
        <dbReference type="ChEBI" id="CHEBI:57783"/>
    </ligand>
</feature>
<feature type="binding site" evidence="1">
    <location>
        <position position="12"/>
    </location>
    <ligand>
        <name>NADPH</name>
        <dbReference type="ChEBI" id="CHEBI:57783"/>
    </ligand>
</feature>
<feature type="binding site" evidence="1">
    <location>
        <position position="35"/>
    </location>
    <ligand>
        <name>NADPH</name>
        <dbReference type="ChEBI" id="CHEBI:57783"/>
    </ligand>
</feature>
<feature type="binding site" evidence="1">
    <location>
        <position position="106"/>
    </location>
    <ligand>
        <name>NADPH</name>
        <dbReference type="ChEBI" id="CHEBI:57783"/>
    </ligand>
</feature>
<feature type="binding site" evidence="1">
    <location>
        <position position="107"/>
    </location>
    <ligand>
        <name>1-deoxy-D-xylulose 5-phosphate</name>
        <dbReference type="ChEBI" id="CHEBI:57792"/>
    </ligand>
</feature>
<feature type="binding site" evidence="1">
    <location>
        <position position="108"/>
    </location>
    <ligand>
        <name>NADPH</name>
        <dbReference type="ChEBI" id="CHEBI:57783"/>
    </ligand>
</feature>
<feature type="binding site" evidence="1">
    <location>
        <position position="132"/>
    </location>
    <ligand>
        <name>Mn(2+)</name>
        <dbReference type="ChEBI" id="CHEBI:29035"/>
    </ligand>
</feature>
<feature type="binding site" evidence="1">
    <location>
        <position position="133"/>
    </location>
    <ligand>
        <name>1-deoxy-D-xylulose 5-phosphate</name>
        <dbReference type="ChEBI" id="CHEBI:57792"/>
    </ligand>
</feature>
<feature type="binding site" evidence="1">
    <location>
        <position position="134"/>
    </location>
    <ligand>
        <name>1-deoxy-D-xylulose 5-phosphate</name>
        <dbReference type="ChEBI" id="CHEBI:57792"/>
    </ligand>
</feature>
<feature type="binding site" evidence="1">
    <location>
        <position position="134"/>
    </location>
    <ligand>
        <name>Mn(2+)</name>
        <dbReference type="ChEBI" id="CHEBI:29035"/>
    </ligand>
</feature>
<feature type="binding site" evidence="1">
    <location>
        <position position="158"/>
    </location>
    <ligand>
        <name>1-deoxy-D-xylulose 5-phosphate</name>
        <dbReference type="ChEBI" id="CHEBI:57792"/>
    </ligand>
</feature>
<feature type="binding site" evidence="1">
    <location>
        <position position="181"/>
    </location>
    <ligand>
        <name>1-deoxy-D-xylulose 5-phosphate</name>
        <dbReference type="ChEBI" id="CHEBI:57792"/>
    </ligand>
</feature>
<feature type="binding site" evidence="1">
    <location>
        <position position="187"/>
    </location>
    <ligand>
        <name>NADPH</name>
        <dbReference type="ChEBI" id="CHEBI:57783"/>
    </ligand>
</feature>
<feature type="binding site" evidence="1">
    <location>
        <position position="194"/>
    </location>
    <ligand>
        <name>1-deoxy-D-xylulose 5-phosphate</name>
        <dbReference type="ChEBI" id="CHEBI:57792"/>
    </ligand>
</feature>
<feature type="binding site" evidence="1">
    <location>
        <position position="199"/>
    </location>
    <ligand>
        <name>1-deoxy-D-xylulose 5-phosphate</name>
        <dbReference type="ChEBI" id="CHEBI:57792"/>
    </ligand>
</feature>
<feature type="binding site" evidence="1">
    <location>
        <position position="200"/>
    </location>
    <ligand>
        <name>1-deoxy-D-xylulose 5-phosphate</name>
        <dbReference type="ChEBI" id="CHEBI:57792"/>
    </ligand>
</feature>
<feature type="binding site" evidence="1">
    <location>
        <position position="203"/>
    </location>
    <ligand>
        <name>1-deoxy-D-xylulose 5-phosphate</name>
        <dbReference type="ChEBI" id="CHEBI:57792"/>
    </ligand>
</feature>
<feature type="binding site" evidence="1">
    <location>
        <position position="203"/>
    </location>
    <ligand>
        <name>Mn(2+)</name>
        <dbReference type="ChEBI" id="CHEBI:29035"/>
    </ligand>
</feature>
<sequence>MKILVLGATGSIGKQAIDVICQLKYQLVGFSYYQNHNEANNILKQLNPNYVLCHSDPKYNKNVKSDLIELIDKSKPKVIINAINGYHGIEASLIALSKKKDLLLANKESLVIAGSQLEAIRKDTKTTIYPIDSEHSALYDLLKDKKKNQIKQLMITASGAGYFNKDISELRKLTYNDLLNHPNWKMGAEISINSATFVNKVYEIVEAYHLFKIKDIIPVVERSSTIHAGVIYQDNSIHFHATTNDMRWAIQSALTKFDNRTNVVQSLDLYQKTIQFEKIDFEQYPIFKIAYDILKNPYTTRGAVLTCINEHVVKLFQKQKINFLQITELISNFYWNYQHKKIDNIWQINDLIFKIKAAISSKYAYLDK</sequence>
<accession>Q7NC17</accession>
<reference key="1">
    <citation type="journal article" date="2003" name="Microbiology">
        <title>The complete genome sequence of the avian pathogen Mycoplasma gallisepticum strain R(low).</title>
        <authorList>
            <person name="Papazisi L."/>
            <person name="Gorton T.S."/>
            <person name="Kutish G."/>
            <person name="Markham P.F."/>
            <person name="Browning G.F."/>
            <person name="Nguyen D.K."/>
            <person name="Swartzell S."/>
            <person name="Madan A."/>
            <person name="Mahairas G."/>
            <person name="Geary S.J."/>
        </authorList>
    </citation>
    <scope>NUCLEOTIDE SEQUENCE [LARGE SCALE GENOMIC DNA]</scope>
    <source>
        <strain>R(low / passage 15 / clone 2)</strain>
    </source>
</reference>
<protein>
    <recommendedName>
        <fullName evidence="1">1-deoxy-D-xylulose 5-phosphate reductoisomerase</fullName>
        <shortName evidence="1">DXP reductoisomerase</shortName>
        <ecNumber evidence="1">1.1.1.267</ecNumber>
    </recommendedName>
    <alternativeName>
        <fullName evidence="1">1-deoxyxylulose-5-phosphate reductoisomerase</fullName>
    </alternativeName>
    <alternativeName>
        <fullName evidence="1">2-C-methyl-D-erythritol 4-phosphate synthase</fullName>
    </alternativeName>
</protein>
<organism>
    <name type="scientific">Mycoplasmoides gallisepticum (strain R(low / passage 15 / clone 2))</name>
    <name type="common">Mycoplasma gallisepticum</name>
    <dbReference type="NCBI Taxonomy" id="710127"/>
    <lineage>
        <taxon>Bacteria</taxon>
        <taxon>Bacillati</taxon>
        <taxon>Mycoplasmatota</taxon>
        <taxon>Mycoplasmoidales</taxon>
        <taxon>Mycoplasmoidaceae</taxon>
        <taxon>Mycoplasmoides</taxon>
    </lineage>
</organism>
<proteinExistence type="inferred from homology"/>
<keyword id="KW-0414">Isoprene biosynthesis</keyword>
<keyword id="KW-0464">Manganese</keyword>
<keyword id="KW-0479">Metal-binding</keyword>
<keyword id="KW-0521">NADP</keyword>
<keyword id="KW-0560">Oxidoreductase</keyword>
<keyword id="KW-1185">Reference proteome</keyword>